<feature type="chain" id="PRO_0000254718" description="Cytochrome b">
    <location>
        <begin position="1"/>
        <end position="379"/>
    </location>
</feature>
<feature type="transmembrane region" description="Helical" evidence="2">
    <location>
        <begin position="33"/>
        <end position="53"/>
    </location>
</feature>
<feature type="transmembrane region" description="Helical" evidence="2">
    <location>
        <begin position="77"/>
        <end position="98"/>
    </location>
</feature>
<feature type="transmembrane region" description="Helical" evidence="2">
    <location>
        <begin position="113"/>
        <end position="133"/>
    </location>
</feature>
<feature type="transmembrane region" description="Helical" evidence="2">
    <location>
        <begin position="178"/>
        <end position="198"/>
    </location>
</feature>
<feature type="transmembrane region" description="Helical" evidence="2">
    <location>
        <begin position="226"/>
        <end position="246"/>
    </location>
</feature>
<feature type="transmembrane region" description="Helical" evidence="2">
    <location>
        <begin position="288"/>
        <end position="308"/>
    </location>
</feature>
<feature type="transmembrane region" description="Helical" evidence="2">
    <location>
        <begin position="320"/>
        <end position="340"/>
    </location>
</feature>
<feature type="transmembrane region" description="Helical" evidence="2">
    <location>
        <begin position="347"/>
        <end position="367"/>
    </location>
</feature>
<feature type="binding site" description="axial binding residue" evidence="2">
    <location>
        <position position="83"/>
    </location>
    <ligand>
        <name>heme b</name>
        <dbReference type="ChEBI" id="CHEBI:60344"/>
        <label>b562</label>
    </ligand>
    <ligandPart>
        <name>Fe</name>
        <dbReference type="ChEBI" id="CHEBI:18248"/>
    </ligandPart>
</feature>
<feature type="binding site" description="axial binding residue" evidence="2">
    <location>
        <position position="97"/>
    </location>
    <ligand>
        <name>heme b</name>
        <dbReference type="ChEBI" id="CHEBI:60344"/>
        <label>b566</label>
    </ligand>
    <ligandPart>
        <name>Fe</name>
        <dbReference type="ChEBI" id="CHEBI:18248"/>
    </ligandPart>
</feature>
<feature type="binding site" description="axial binding residue" evidence="2">
    <location>
        <position position="182"/>
    </location>
    <ligand>
        <name>heme b</name>
        <dbReference type="ChEBI" id="CHEBI:60344"/>
        <label>b562</label>
    </ligand>
    <ligandPart>
        <name>Fe</name>
        <dbReference type="ChEBI" id="CHEBI:18248"/>
    </ligandPart>
</feature>
<feature type="binding site" description="axial binding residue" evidence="2">
    <location>
        <position position="196"/>
    </location>
    <ligand>
        <name>heme b</name>
        <dbReference type="ChEBI" id="CHEBI:60344"/>
        <label>b566</label>
    </ligand>
    <ligandPart>
        <name>Fe</name>
        <dbReference type="ChEBI" id="CHEBI:18248"/>
    </ligandPart>
</feature>
<feature type="binding site" evidence="2">
    <location>
        <position position="201"/>
    </location>
    <ligand>
        <name>a ubiquinone</name>
        <dbReference type="ChEBI" id="CHEBI:16389"/>
    </ligand>
</feature>
<reference key="1">
    <citation type="journal article" date="2004" name="Acta Chiropt.">
        <title>Phylogeny of African myotis bats (Chiroptera, Vespertilionidae) inferred from cytochrome b sequences.</title>
        <authorList>
            <person name="Stadelmann B."/>
            <person name="Jacobs D.S."/>
            <person name="Schoeman C."/>
            <person name="Ruedi M."/>
        </authorList>
    </citation>
    <scope>NUCLEOTIDE SEQUENCE [GENOMIC DNA]</scope>
    <source>
        <tissue>Wing</tissue>
    </source>
</reference>
<comment type="function">
    <text evidence="2">Component of the ubiquinol-cytochrome c reductase complex (complex III or cytochrome b-c1 complex) that is part of the mitochondrial respiratory chain. The b-c1 complex mediates electron transfer from ubiquinol to cytochrome c. Contributes to the generation of a proton gradient across the mitochondrial membrane that is then used for ATP synthesis.</text>
</comment>
<comment type="cofactor">
    <cofactor evidence="2">
        <name>heme b</name>
        <dbReference type="ChEBI" id="CHEBI:60344"/>
    </cofactor>
    <text evidence="2">Binds 2 heme b groups non-covalently.</text>
</comment>
<comment type="subunit">
    <text evidence="2">The cytochrome bc1 complex contains 11 subunits: 3 respiratory subunits (MT-CYB, CYC1 and UQCRFS1), 2 core proteins (UQCRC1 and UQCRC2) and 6 low-molecular weight proteins (UQCRH/QCR6, UQCRB/QCR7, UQCRQ/QCR8, UQCR10/QCR9, UQCR11/QCR10 and a cleavage product of UQCRFS1). This cytochrome bc1 complex then forms a dimer.</text>
</comment>
<comment type="subcellular location">
    <subcellularLocation>
        <location evidence="2">Mitochondrion inner membrane</location>
        <topology evidence="2">Multi-pass membrane protein</topology>
    </subcellularLocation>
</comment>
<comment type="miscellaneous">
    <text evidence="1">Heme 1 (or BL or b562) is low-potential and absorbs at about 562 nm, and heme 2 (or BH or b566) is high-potential and absorbs at about 566 nm.</text>
</comment>
<comment type="similarity">
    <text evidence="3 4">Belongs to the cytochrome b family.</text>
</comment>
<comment type="caution">
    <text evidence="2">The full-length protein contains only eight transmembrane helices, not nine as predicted by bioinformatics tools.</text>
</comment>
<protein>
    <recommendedName>
        <fullName>Cytochrome b</fullName>
    </recommendedName>
    <alternativeName>
        <fullName>Complex III subunit 3</fullName>
    </alternativeName>
    <alternativeName>
        <fullName>Complex III subunit III</fullName>
    </alternativeName>
    <alternativeName>
        <fullName>Cytochrome b-c1 complex subunit 3</fullName>
    </alternativeName>
    <alternativeName>
        <fullName>Ubiquinol-cytochrome-c reductase complex cytochrome b subunit</fullName>
    </alternativeName>
</protein>
<proteinExistence type="inferred from homology"/>
<accession>Q5F4G3</accession>
<organism>
    <name type="scientific">Myotis alcathoe</name>
    <name type="common">Alcathoe's myotis</name>
    <dbReference type="NCBI Taxonomy" id="155916"/>
    <lineage>
        <taxon>Eukaryota</taxon>
        <taxon>Metazoa</taxon>
        <taxon>Chordata</taxon>
        <taxon>Craniata</taxon>
        <taxon>Vertebrata</taxon>
        <taxon>Euteleostomi</taxon>
        <taxon>Mammalia</taxon>
        <taxon>Eutheria</taxon>
        <taxon>Laurasiatheria</taxon>
        <taxon>Chiroptera</taxon>
        <taxon>Yangochiroptera</taxon>
        <taxon>Vespertilionidae</taxon>
        <taxon>Myotis</taxon>
    </lineage>
</organism>
<keyword id="KW-0249">Electron transport</keyword>
<keyword id="KW-0349">Heme</keyword>
<keyword id="KW-0408">Iron</keyword>
<keyword id="KW-0472">Membrane</keyword>
<keyword id="KW-0479">Metal-binding</keyword>
<keyword id="KW-0496">Mitochondrion</keyword>
<keyword id="KW-0999">Mitochondrion inner membrane</keyword>
<keyword id="KW-0679">Respiratory chain</keyword>
<keyword id="KW-0812">Transmembrane</keyword>
<keyword id="KW-1133">Transmembrane helix</keyword>
<keyword id="KW-0813">Transport</keyword>
<keyword id="KW-0830">Ubiquinone</keyword>
<sequence>MTNIRKSHPLMKIINNSFIDLPAPSNISSWWNFGSLLGICLALQILTGLFLAMHYTSDTATAFNSVTHICRDVNYGWILRYMHANGASMFFICLYLHVGRGLYYGSYMYTETWNIGVILLFAVMATAFMGYVLPWGQMSFWGATVITNLLSAIPYIGTSLVEWIWGGFSVDKATLTRFFAFHFLLPFVISAMVMVHLLFLHETGSNNPTGIPSNMDMIPFHPYYTIKDILGLLIMITALLLLVLFHPDMLGDPDNYMPANPLNTPPHIKPEWYFLFAYAILRSIPNKLGGVLALVLSILILIIIPLLHTSKQRSMAFRPLSQCLFWLLVADLLTLTWIGGQPVEHPYIIIGQLASILYFSIIIILMPLTSLVENHLLKW</sequence>
<evidence type="ECO:0000250" key="1"/>
<evidence type="ECO:0000250" key="2">
    <source>
        <dbReference type="UniProtKB" id="P00157"/>
    </source>
</evidence>
<evidence type="ECO:0000255" key="3">
    <source>
        <dbReference type="PROSITE-ProRule" id="PRU00967"/>
    </source>
</evidence>
<evidence type="ECO:0000255" key="4">
    <source>
        <dbReference type="PROSITE-ProRule" id="PRU00968"/>
    </source>
</evidence>
<dbReference type="EMBL" id="AJ841955">
    <property type="protein sequence ID" value="CAH56548.1"/>
    <property type="molecule type" value="Genomic_DNA"/>
</dbReference>
<dbReference type="SMR" id="Q5F4G3"/>
<dbReference type="GO" id="GO:0005743">
    <property type="term" value="C:mitochondrial inner membrane"/>
    <property type="evidence" value="ECO:0007669"/>
    <property type="project" value="UniProtKB-SubCell"/>
</dbReference>
<dbReference type="GO" id="GO:0045275">
    <property type="term" value="C:respiratory chain complex III"/>
    <property type="evidence" value="ECO:0007669"/>
    <property type="project" value="InterPro"/>
</dbReference>
<dbReference type="GO" id="GO:0046872">
    <property type="term" value="F:metal ion binding"/>
    <property type="evidence" value="ECO:0007669"/>
    <property type="project" value="UniProtKB-KW"/>
</dbReference>
<dbReference type="GO" id="GO:0008121">
    <property type="term" value="F:ubiquinol-cytochrome-c reductase activity"/>
    <property type="evidence" value="ECO:0007669"/>
    <property type="project" value="InterPro"/>
</dbReference>
<dbReference type="GO" id="GO:0006122">
    <property type="term" value="P:mitochondrial electron transport, ubiquinol to cytochrome c"/>
    <property type="evidence" value="ECO:0007669"/>
    <property type="project" value="TreeGrafter"/>
</dbReference>
<dbReference type="CDD" id="cd00290">
    <property type="entry name" value="cytochrome_b_C"/>
    <property type="match status" value="1"/>
</dbReference>
<dbReference type="CDD" id="cd00284">
    <property type="entry name" value="Cytochrome_b_N"/>
    <property type="match status" value="1"/>
</dbReference>
<dbReference type="FunFam" id="1.20.810.10:FF:000002">
    <property type="entry name" value="Cytochrome b"/>
    <property type="match status" value="1"/>
</dbReference>
<dbReference type="Gene3D" id="1.20.810.10">
    <property type="entry name" value="Cytochrome Bc1 Complex, Chain C"/>
    <property type="match status" value="1"/>
</dbReference>
<dbReference type="InterPro" id="IPR005798">
    <property type="entry name" value="Cyt_b/b6_C"/>
</dbReference>
<dbReference type="InterPro" id="IPR036150">
    <property type="entry name" value="Cyt_b/b6_C_sf"/>
</dbReference>
<dbReference type="InterPro" id="IPR005797">
    <property type="entry name" value="Cyt_b/b6_N"/>
</dbReference>
<dbReference type="InterPro" id="IPR027387">
    <property type="entry name" value="Cytb/b6-like_sf"/>
</dbReference>
<dbReference type="InterPro" id="IPR030689">
    <property type="entry name" value="Cytochrome_b"/>
</dbReference>
<dbReference type="InterPro" id="IPR048260">
    <property type="entry name" value="Cytochrome_b_C_euk/bac"/>
</dbReference>
<dbReference type="InterPro" id="IPR048259">
    <property type="entry name" value="Cytochrome_b_N_euk/bac"/>
</dbReference>
<dbReference type="InterPro" id="IPR016174">
    <property type="entry name" value="Di-haem_cyt_TM"/>
</dbReference>
<dbReference type="PANTHER" id="PTHR19271">
    <property type="entry name" value="CYTOCHROME B"/>
    <property type="match status" value="1"/>
</dbReference>
<dbReference type="PANTHER" id="PTHR19271:SF16">
    <property type="entry name" value="CYTOCHROME B"/>
    <property type="match status" value="1"/>
</dbReference>
<dbReference type="Pfam" id="PF00032">
    <property type="entry name" value="Cytochrom_B_C"/>
    <property type="match status" value="1"/>
</dbReference>
<dbReference type="Pfam" id="PF00033">
    <property type="entry name" value="Cytochrome_B"/>
    <property type="match status" value="1"/>
</dbReference>
<dbReference type="PIRSF" id="PIRSF038885">
    <property type="entry name" value="COB"/>
    <property type="match status" value="1"/>
</dbReference>
<dbReference type="SUPFAM" id="SSF81648">
    <property type="entry name" value="a domain/subunit of cytochrome bc1 complex (Ubiquinol-cytochrome c reductase)"/>
    <property type="match status" value="1"/>
</dbReference>
<dbReference type="SUPFAM" id="SSF81342">
    <property type="entry name" value="Transmembrane di-heme cytochromes"/>
    <property type="match status" value="1"/>
</dbReference>
<dbReference type="PROSITE" id="PS51003">
    <property type="entry name" value="CYTB_CTER"/>
    <property type="match status" value="1"/>
</dbReference>
<dbReference type="PROSITE" id="PS51002">
    <property type="entry name" value="CYTB_NTER"/>
    <property type="match status" value="1"/>
</dbReference>
<geneLocation type="mitochondrion"/>
<name>CYB_MYOAC</name>
<gene>
    <name type="primary">MT-CYB</name>
    <name type="synonym">COB</name>
    <name type="synonym">CYTB</name>
    <name type="synonym">MTCYB</name>
</gene>